<feature type="chain" id="PRO_0000102638" description="Ribosome-binding factor A">
    <location>
        <begin position="1"/>
        <end position="122"/>
    </location>
</feature>
<name>RBFA_BURPS</name>
<proteinExistence type="inferred from homology"/>
<organism>
    <name type="scientific">Burkholderia pseudomallei (strain K96243)</name>
    <dbReference type="NCBI Taxonomy" id="272560"/>
    <lineage>
        <taxon>Bacteria</taxon>
        <taxon>Pseudomonadati</taxon>
        <taxon>Pseudomonadota</taxon>
        <taxon>Betaproteobacteria</taxon>
        <taxon>Burkholderiales</taxon>
        <taxon>Burkholderiaceae</taxon>
        <taxon>Burkholderia</taxon>
        <taxon>pseudomallei group</taxon>
    </lineage>
</organism>
<keyword id="KW-0963">Cytoplasm</keyword>
<keyword id="KW-1185">Reference proteome</keyword>
<keyword id="KW-0690">Ribosome biogenesis</keyword>
<accession>Q63TP9</accession>
<reference key="1">
    <citation type="journal article" date="2004" name="Proc. Natl. Acad. Sci. U.S.A.">
        <title>Genomic plasticity of the causative agent of melioidosis, Burkholderia pseudomallei.</title>
        <authorList>
            <person name="Holden M.T.G."/>
            <person name="Titball R.W."/>
            <person name="Peacock S.J."/>
            <person name="Cerdeno-Tarraga A.-M."/>
            <person name="Atkins T."/>
            <person name="Crossman L.C."/>
            <person name="Pitt T."/>
            <person name="Churcher C."/>
            <person name="Mungall K.L."/>
            <person name="Bentley S.D."/>
            <person name="Sebaihia M."/>
            <person name="Thomson N.R."/>
            <person name="Bason N."/>
            <person name="Beacham I.R."/>
            <person name="Brooks K."/>
            <person name="Brown K.A."/>
            <person name="Brown N.F."/>
            <person name="Challis G.L."/>
            <person name="Cherevach I."/>
            <person name="Chillingworth T."/>
            <person name="Cronin A."/>
            <person name="Crossett B."/>
            <person name="Davis P."/>
            <person name="DeShazer D."/>
            <person name="Feltwell T."/>
            <person name="Fraser A."/>
            <person name="Hance Z."/>
            <person name="Hauser H."/>
            <person name="Holroyd S."/>
            <person name="Jagels K."/>
            <person name="Keith K.E."/>
            <person name="Maddison M."/>
            <person name="Moule S."/>
            <person name="Price C."/>
            <person name="Quail M.A."/>
            <person name="Rabbinowitsch E."/>
            <person name="Rutherford K."/>
            <person name="Sanders M."/>
            <person name="Simmonds M."/>
            <person name="Songsivilai S."/>
            <person name="Stevens K."/>
            <person name="Tumapa S."/>
            <person name="Vesaratchavest M."/>
            <person name="Whitehead S."/>
            <person name="Yeats C."/>
            <person name="Barrell B.G."/>
            <person name="Oyston P.C.F."/>
            <person name="Parkhill J."/>
        </authorList>
    </citation>
    <scope>NUCLEOTIDE SEQUENCE [LARGE SCALE GENOMIC DNA]</scope>
    <source>
        <strain>K96243</strain>
    </source>
</reference>
<comment type="function">
    <text evidence="1">One of several proteins that assist in the late maturation steps of the functional core of the 30S ribosomal subunit. Associates with free 30S ribosomal subunits (but not with 30S subunits that are part of 70S ribosomes or polysomes). Required for efficient processing of 16S rRNA. May interact with the 5'-terminal helix region of 16S rRNA.</text>
</comment>
<comment type="subunit">
    <text evidence="1">Monomer. Binds 30S ribosomal subunits, but not 50S ribosomal subunits or 70S ribosomes.</text>
</comment>
<comment type="subcellular location">
    <subcellularLocation>
        <location evidence="1">Cytoplasm</location>
    </subcellularLocation>
</comment>
<comment type="similarity">
    <text evidence="1">Belongs to the RbfA family.</text>
</comment>
<sequence length="122" mass="13808">MSKKRSSPNRNVQIADQIQRDLSELIMREVKDPRIGIVTIQSVELTPDYAHAKVYFTALTGTPADTQEALNHAAGHLHNLLFKRLHIHTVPTLHFHYDQTIEKAVAMSRLIDEANATRAKDD</sequence>
<evidence type="ECO:0000255" key="1">
    <source>
        <dbReference type="HAMAP-Rule" id="MF_00003"/>
    </source>
</evidence>
<gene>
    <name evidence="1" type="primary">rbfA</name>
    <name type="ordered locus">BPSL1917</name>
</gene>
<protein>
    <recommendedName>
        <fullName evidence="1">Ribosome-binding factor A</fullName>
    </recommendedName>
</protein>
<dbReference type="EMBL" id="BX571965">
    <property type="protein sequence ID" value="CAH35917.1"/>
    <property type="molecule type" value="Genomic_DNA"/>
</dbReference>
<dbReference type="RefSeq" id="WP_004199441.1">
    <property type="nucleotide sequence ID" value="NZ_CP009538.1"/>
</dbReference>
<dbReference type="RefSeq" id="YP_108517.1">
    <property type="nucleotide sequence ID" value="NC_006350.1"/>
</dbReference>
<dbReference type="SMR" id="Q63TP9"/>
<dbReference type="STRING" id="272560.BPSL1917"/>
<dbReference type="GeneID" id="93060074"/>
<dbReference type="KEGG" id="bps:BPSL1917"/>
<dbReference type="PATRIC" id="fig|272560.51.peg.4061"/>
<dbReference type="eggNOG" id="COG0858">
    <property type="taxonomic scope" value="Bacteria"/>
</dbReference>
<dbReference type="Proteomes" id="UP000000605">
    <property type="component" value="Chromosome 1"/>
</dbReference>
<dbReference type="GO" id="GO:0005829">
    <property type="term" value="C:cytosol"/>
    <property type="evidence" value="ECO:0007669"/>
    <property type="project" value="TreeGrafter"/>
</dbReference>
<dbReference type="GO" id="GO:0043024">
    <property type="term" value="F:ribosomal small subunit binding"/>
    <property type="evidence" value="ECO:0007669"/>
    <property type="project" value="TreeGrafter"/>
</dbReference>
<dbReference type="GO" id="GO:0030490">
    <property type="term" value="P:maturation of SSU-rRNA"/>
    <property type="evidence" value="ECO:0007669"/>
    <property type="project" value="UniProtKB-UniRule"/>
</dbReference>
<dbReference type="Gene3D" id="3.30.300.20">
    <property type="match status" value="1"/>
</dbReference>
<dbReference type="HAMAP" id="MF_00003">
    <property type="entry name" value="RbfA"/>
    <property type="match status" value="1"/>
</dbReference>
<dbReference type="InterPro" id="IPR015946">
    <property type="entry name" value="KH_dom-like_a/b"/>
</dbReference>
<dbReference type="InterPro" id="IPR000238">
    <property type="entry name" value="RbfA"/>
</dbReference>
<dbReference type="InterPro" id="IPR023799">
    <property type="entry name" value="RbfA_dom_sf"/>
</dbReference>
<dbReference type="NCBIfam" id="TIGR00082">
    <property type="entry name" value="rbfA"/>
    <property type="match status" value="1"/>
</dbReference>
<dbReference type="PANTHER" id="PTHR33515">
    <property type="entry name" value="RIBOSOME-BINDING FACTOR A, CHLOROPLASTIC-RELATED"/>
    <property type="match status" value="1"/>
</dbReference>
<dbReference type="PANTHER" id="PTHR33515:SF1">
    <property type="entry name" value="RIBOSOME-BINDING FACTOR A, CHLOROPLASTIC-RELATED"/>
    <property type="match status" value="1"/>
</dbReference>
<dbReference type="Pfam" id="PF02033">
    <property type="entry name" value="RBFA"/>
    <property type="match status" value="1"/>
</dbReference>
<dbReference type="SUPFAM" id="SSF89919">
    <property type="entry name" value="Ribosome-binding factor A, RbfA"/>
    <property type="match status" value="1"/>
</dbReference>